<proteinExistence type="evidence at protein level"/>
<sequence length="161" mass="17992">MQFMGTASRMASTQRAKPMEMPRISRDTARMLVNYLTYQAVCVIRDQLAETNPAGAYRLQVFSAEFSFQDGEAYLAALLNHDRELGLRVMTVREHLAEHILDYLPEMTIAQIQEANINHRRALLERLTGLGAEPSLPETEVSDRPSDSATPDDASNASHAD</sequence>
<accession>A0A0H3K9R3</accession>
<name>RBCX_SYNP6</name>
<evidence type="ECO:0000250" key="1">
    <source>
        <dbReference type="UniProtKB" id="Q44212"/>
    </source>
</evidence>
<evidence type="ECO:0000255" key="2">
    <source>
        <dbReference type="HAMAP-Rule" id="MF_00855"/>
    </source>
</evidence>
<evidence type="ECO:0000256" key="3">
    <source>
        <dbReference type="SAM" id="MobiDB-lite"/>
    </source>
</evidence>
<evidence type="ECO:0000269" key="4">
    <source>
    </source>
</evidence>
<evidence type="ECO:0000269" key="5">
    <source>
    </source>
</evidence>
<evidence type="ECO:0000303" key="6">
    <source>
    </source>
</evidence>
<evidence type="ECO:0000303" key="7">
    <source>
    </source>
</evidence>
<evidence type="ECO:0000305" key="8"/>
<evidence type="ECO:0000305" key="9">
    <source>
    </source>
</evidence>
<evidence type="ECO:0000305" key="10">
    <source>
    </source>
</evidence>
<reference key="1">
    <citation type="journal article" date="2007" name="Photosyn. Res.">
        <title>Complete nucleotide sequence of the freshwater unicellular cyanobacterium Synechococcus elongatus PCC 6301 chromosome: gene content and organization.</title>
        <authorList>
            <person name="Sugita C."/>
            <person name="Ogata K."/>
            <person name="Shikata M."/>
            <person name="Jikuya H."/>
            <person name="Takano J."/>
            <person name="Furumichi M."/>
            <person name="Kanehisa M."/>
            <person name="Omata T."/>
            <person name="Sugiura M."/>
            <person name="Sugita M."/>
        </authorList>
    </citation>
    <scope>NUCLEOTIDE SEQUENCE [LARGE SCALE GENOMIC DNA]</scope>
    <source>
        <strain>ATCC 27144 / PCC 6301 / SAUG 1402/1</strain>
    </source>
</reference>
<reference key="2">
    <citation type="journal article" date="2010" name="Nature">
        <title>Coupled chaperone action in folding and assembly of hexadecameric Rubisco.</title>
        <authorList>
            <person name="Liu C."/>
            <person name="Young A.L."/>
            <person name="Starling-Windhof A."/>
            <person name="Bracher A."/>
            <person name="Saschenbrecker S."/>
            <person name="Rao B.V."/>
            <person name="Rao K.V."/>
            <person name="Berninghausen O."/>
            <person name="Mielke T."/>
            <person name="Hartl F.U."/>
            <person name="Beckmann R."/>
            <person name="Hayer-Hartl M."/>
        </authorList>
    </citation>
    <scope>FUNCTION</scope>
    <scope>SUBUNIT</scope>
    <source>
        <strain>ATCC 27144 / PCC 6301 / SAUG 1402/1</strain>
    </source>
</reference>
<reference key="3">
    <citation type="journal article" date="2011" name="Nat. Struct. Mol. Biol.">
        <title>Crystal structure of a chaperone-bound assembly intermediate of form I Rubisco.</title>
        <authorList>
            <person name="Bracher A."/>
            <person name="Starling-Windhof A."/>
            <person name="Hartl F.U."/>
            <person name="Hayer-Hartl M."/>
        </authorList>
    </citation>
    <scope>SUBUNIT</scope>
    <source>
        <strain>ATCC 27144 / PCC 6301 / SAUG 1402/1</strain>
    </source>
</reference>
<gene>
    <name evidence="2 6" type="primary">rbcX</name>
    <name type="ordered locus">syc2521_d</name>
</gene>
<dbReference type="EMBL" id="AP008231">
    <property type="protein sequence ID" value="BAD80711.1"/>
    <property type="molecule type" value="Genomic_DNA"/>
</dbReference>
<dbReference type="SMR" id="A0A0H3K9R3"/>
<dbReference type="IntAct" id="A0A0H3K9R3">
    <property type="interactions" value="1"/>
</dbReference>
<dbReference type="KEGG" id="syc:syc2521_d"/>
<dbReference type="eggNOG" id="ENOG50315SX">
    <property type="taxonomic scope" value="Bacteria"/>
</dbReference>
<dbReference type="Proteomes" id="UP000001175">
    <property type="component" value="Chromosome"/>
</dbReference>
<dbReference type="GO" id="GO:0031470">
    <property type="term" value="C:carboxysome"/>
    <property type="evidence" value="ECO:0007669"/>
    <property type="project" value="UniProtKB-SubCell"/>
</dbReference>
<dbReference type="GO" id="GO:0005737">
    <property type="term" value="C:cytoplasm"/>
    <property type="evidence" value="ECO:0007669"/>
    <property type="project" value="UniProtKB-SubCell"/>
</dbReference>
<dbReference type="GO" id="GO:0044183">
    <property type="term" value="F:protein folding chaperone"/>
    <property type="evidence" value="ECO:0007669"/>
    <property type="project" value="InterPro"/>
</dbReference>
<dbReference type="GO" id="GO:0015977">
    <property type="term" value="P:carbon fixation"/>
    <property type="evidence" value="ECO:0007669"/>
    <property type="project" value="UniProtKB-UniRule"/>
</dbReference>
<dbReference type="GO" id="GO:0015979">
    <property type="term" value="P:photosynthesis"/>
    <property type="evidence" value="ECO:0007669"/>
    <property type="project" value="UniProtKB-KW"/>
</dbReference>
<dbReference type="GO" id="GO:0110102">
    <property type="term" value="P:ribulose bisphosphate carboxylase complex assembly"/>
    <property type="evidence" value="ECO:0000353"/>
    <property type="project" value="UniProtKB"/>
</dbReference>
<dbReference type="Gene3D" id="1.10.1200.210">
    <property type="entry name" value="Chaperonin-like RbcX"/>
    <property type="match status" value="1"/>
</dbReference>
<dbReference type="HAMAP" id="MF_00855">
    <property type="entry name" value="RbcX"/>
    <property type="match status" value="1"/>
</dbReference>
<dbReference type="InterPro" id="IPR038052">
    <property type="entry name" value="Chaperonin_RbcX_sf"/>
</dbReference>
<dbReference type="InterPro" id="IPR003435">
    <property type="entry name" value="Chaperonin_RcbX"/>
</dbReference>
<dbReference type="InterPro" id="IPR046381">
    <property type="entry name" value="RbcX"/>
</dbReference>
<dbReference type="PANTHER" id="PTHR33791">
    <property type="entry name" value="CHAPERONIN-LIKE RBCX PROTEIN 1, CHLOROPLASTIC"/>
    <property type="match status" value="1"/>
</dbReference>
<dbReference type="PANTHER" id="PTHR33791:SF1">
    <property type="entry name" value="RUBISCO CHAPERONE RBCX"/>
    <property type="match status" value="1"/>
</dbReference>
<dbReference type="Pfam" id="PF02341">
    <property type="entry name" value="RbcX"/>
    <property type="match status" value="1"/>
</dbReference>
<dbReference type="SUPFAM" id="SSF158615">
    <property type="entry name" value="RbcX-like"/>
    <property type="match status" value="1"/>
</dbReference>
<protein>
    <recommendedName>
        <fullName evidence="2 7">RuBisCO chaperone RbcX</fullName>
    </recommendedName>
</protein>
<organism>
    <name type="scientific">Synechococcus sp. (strain ATCC 27144 / PCC 6301 / SAUG 1402/1)</name>
    <name type="common">Anacystis nidulans</name>
    <dbReference type="NCBI Taxonomy" id="269084"/>
    <lineage>
        <taxon>Bacteria</taxon>
        <taxon>Bacillati</taxon>
        <taxon>Cyanobacteriota</taxon>
        <taxon>Cyanophyceae</taxon>
        <taxon>Synechococcales</taxon>
        <taxon>Synechococcaceae</taxon>
        <taxon>Synechococcus</taxon>
    </lineage>
</organism>
<comment type="function">
    <text evidence="2 9">An RbcL-specific chaperone. The central cleft of the RbcX homodimer (RbcX2) binds the C-terminus of an RbcL monomer, stabilizing the C-terminus and probably preventing its reassociation with chaperonin GroEL-ES. At the same time the peripheral region of RbcX2 binds a second RbcL monomer, bridging the RbcL homodimers in the correct orientation. The RbcX2(2)-bound RbcL dimers then assemble into the RbcL8 core (RbcL8-(RbcX2)8). RbcS binding triggers the release of RbcX2.</text>
</comment>
<comment type="subunit">
    <text evidence="1 4 5 9 10">Homodimer (Probable). Interacts with the exposed C-terminal peptide of endogenous RbcL ('Lys-460-Asp-470') via its central cleft, as well as C-terminal peptides from other cyanobacterial RbcL (PubMed:20075914, PubMed:21765418). Contacts a second RbcL monomer via its peripheral polar surface (By similarity).</text>
</comment>
<comment type="interaction">
    <interactant intactId="EBI-15936812">
        <id>A0A0H3K9R3</id>
    </interactant>
    <interactant intactId="EBI-9023246">
        <id>P00880</id>
        <label>cbbL</label>
    </interactant>
    <organismsDiffer>false</organismsDiffer>
    <experiments>3</experiments>
</comment>
<comment type="subcellular location">
    <subcellularLocation>
        <location evidence="2">Carboxysome</location>
    </subcellularLocation>
    <subcellularLocation>
        <location evidence="2">Cytoplasm</location>
    </subcellularLocation>
    <text evidence="2 8">Most protein is cytoplasmic, but some is in the carboxysome. This cyanobacterium makes beta-type carboxysomes (Probable).</text>
</comment>
<comment type="domain">
    <text evidence="2">The homodimer has 2 functional domains, a central cleft essential for production of soluble RbcL in which the RbcL peptide binds, and a polar surface which plays a role in correct RbcL subunit arrangement.</text>
</comment>
<comment type="similarity">
    <text evidence="2">Belongs to the RbcX family.</text>
</comment>
<keyword id="KW-1283">Bacterial microcompartment</keyword>
<keyword id="KW-0120">Carbon dioxide fixation</keyword>
<keyword id="KW-1282">Carboxysome</keyword>
<keyword id="KW-0143">Chaperone</keyword>
<keyword id="KW-0963">Cytoplasm</keyword>
<keyword id="KW-0602">Photosynthesis</keyword>
<feature type="chain" id="PRO_0000451302" description="RuBisCO chaperone RbcX">
    <location>
        <begin position="1"/>
        <end position="161"/>
    </location>
</feature>
<feature type="region of interest" description="Disordered" evidence="3">
    <location>
        <begin position="1"/>
        <end position="20"/>
    </location>
</feature>
<feature type="region of interest" description="Disordered" evidence="3">
    <location>
        <begin position="130"/>
        <end position="161"/>
    </location>
</feature>
<feature type="compositionally biased region" description="Polar residues" evidence="3">
    <location>
        <begin position="147"/>
        <end position="161"/>
    </location>
</feature>